<protein>
    <recommendedName>
        <fullName evidence="1">Dihydroorotate dehydrogenase (quinone)</fullName>
        <ecNumber evidence="1">1.3.5.2</ecNumber>
    </recommendedName>
    <alternativeName>
        <fullName evidence="1">DHOdehase</fullName>
        <shortName evidence="1">DHOD</shortName>
        <shortName evidence="1">DHODase</shortName>
    </alternativeName>
    <alternativeName>
        <fullName evidence="1">Dihydroorotate oxidase</fullName>
    </alternativeName>
</protein>
<sequence length="360" mass="39905">MSFFRCIGRSALFMLDPEHAHRLAIVGLKSGLNGCQKVVDKRLSVTIAGLKFKNFIGLAAGFDKNAEVVDEIFRLGFGFTEIGTVTPKPQIGNPKPRLFRLKEDEAIINRMGFNNDGHQVVDDRLRICKKAGVVGVNIGANKDTVDKIDDYTVGIAHFYDVADYFTVNISSPNTPGLRDLQARDSLHLLLNAISKARKEQEKKHGFSIPIFLKIAPDLSEKELDDIAEEIKLSDFDGLIVSNTTLSRQGLNNSHFSNEEGGLSGRPLFERSTIVLAKMRQKLGKEIAIIGVGGVKDAQTALEKVKAGADLIQLYSGMVYEGPNLVITILKEILQMMQQDGVDNIKDYRDHNLEHWAKFPL</sequence>
<keyword id="KW-1003">Cell membrane</keyword>
<keyword id="KW-0285">Flavoprotein</keyword>
<keyword id="KW-0288">FMN</keyword>
<keyword id="KW-0472">Membrane</keyword>
<keyword id="KW-0560">Oxidoreductase</keyword>
<keyword id="KW-0665">Pyrimidine biosynthesis</keyword>
<reference key="1">
    <citation type="journal article" date="2007" name="Nat. Genet.">
        <title>Genomic analysis of Bartonella identifies type IV secretion systems as host adaptability factors.</title>
        <authorList>
            <person name="Saenz H.L."/>
            <person name="Engel P."/>
            <person name="Stoeckli M.C."/>
            <person name="Lanz C."/>
            <person name="Raddatz G."/>
            <person name="Vayssier-Taussat M."/>
            <person name="Birtles R."/>
            <person name="Schuster S.C."/>
            <person name="Dehio C."/>
        </authorList>
    </citation>
    <scope>NUCLEOTIDE SEQUENCE [LARGE SCALE GENOMIC DNA]</scope>
    <source>
        <strain>CIP 105476 / IBS 506</strain>
    </source>
</reference>
<organism>
    <name type="scientific">Bartonella tribocorum (strain CIP 105476 / IBS 506)</name>
    <dbReference type="NCBI Taxonomy" id="382640"/>
    <lineage>
        <taxon>Bacteria</taxon>
        <taxon>Pseudomonadati</taxon>
        <taxon>Pseudomonadota</taxon>
        <taxon>Alphaproteobacteria</taxon>
        <taxon>Hyphomicrobiales</taxon>
        <taxon>Bartonellaceae</taxon>
        <taxon>Bartonella</taxon>
    </lineage>
</organism>
<gene>
    <name evidence="1" type="primary">pyrD</name>
    <name type="ordered locus">BT_0576</name>
</gene>
<comment type="function">
    <text evidence="1">Catalyzes the conversion of dihydroorotate to orotate with quinone as electron acceptor.</text>
</comment>
<comment type="catalytic activity">
    <reaction evidence="1">
        <text>(S)-dihydroorotate + a quinone = orotate + a quinol</text>
        <dbReference type="Rhea" id="RHEA:30187"/>
        <dbReference type="ChEBI" id="CHEBI:24646"/>
        <dbReference type="ChEBI" id="CHEBI:30839"/>
        <dbReference type="ChEBI" id="CHEBI:30864"/>
        <dbReference type="ChEBI" id="CHEBI:132124"/>
        <dbReference type="EC" id="1.3.5.2"/>
    </reaction>
</comment>
<comment type="cofactor">
    <cofactor evidence="1">
        <name>FMN</name>
        <dbReference type="ChEBI" id="CHEBI:58210"/>
    </cofactor>
    <text evidence="1">Binds 1 FMN per subunit.</text>
</comment>
<comment type="pathway">
    <text evidence="1">Pyrimidine metabolism; UMP biosynthesis via de novo pathway; orotate from (S)-dihydroorotate (quinone route): step 1/1.</text>
</comment>
<comment type="subunit">
    <text evidence="1">Monomer.</text>
</comment>
<comment type="subcellular location">
    <subcellularLocation>
        <location evidence="1">Cell membrane</location>
        <topology evidence="1">Peripheral membrane protein</topology>
    </subcellularLocation>
</comment>
<comment type="similarity">
    <text evidence="1">Belongs to the dihydroorotate dehydrogenase family. Type 2 subfamily.</text>
</comment>
<name>PYRD_BART1</name>
<proteinExistence type="inferred from homology"/>
<dbReference type="EC" id="1.3.5.2" evidence="1"/>
<dbReference type="EMBL" id="AM260525">
    <property type="protein sequence ID" value="CAK01023.1"/>
    <property type="molecule type" value="Genomic_DNA"/>
</dbReference>
<dbReference type="RefSeq" id="WP_012231109.1">
    <property type="nucleotide sequence ID" value="NC_010161.1"/>
</dbReference>
<dbReference type="SMR" id="A9IQ81"/>
<dbReference type="KEGG" id="btr:BT_0576"/>
<dbReference type="eggNOG" id="COG0167">
    <property type="taxonomic scope" value="Bacteria"/>
</dbReference>
<dbReference type="HOGENOM" id="CLU_013640_2_0_5"/>
<dbReference type="UniPathway" id="UPA00070">
    <property type="reaction ID" value="UER00946"/>
</dbReference>
<dbReference type="Proteomes" id="UP000001592">
    <property type="component" value="Chromosome"/>
</dbReference>
<dbReference type="GO" id="GO:0005737">
    <property type="term" value="C:cytoplasm"/>
    <property type="evidence" value="ECO:0007669"/>
    <property type="project" value="InterPro"/>
</dbReference>
<dbReference type="GO" id="GO:0005886">
    <property type="term" value="C:plasma membrane"/>
    <property type="evidence" value="ECO:0007669"/>
    <property type="project" value="UniProtKB-SubCell"/>
</dbReference>
<dbReference type="GO" id="GO:0106430">
    <property type="term" value="F:dihydroorotate dehydrogenase (quinone) activity"/>
    <property type="evidence" value="ECO:0007669"/>
    <property type="project" value="UniProtKB-EC"/>
</dbReference>
<dbReference type="GO" id="GO:0006207">
    <property type="term" value="P:'de novo' pyrimidine nucleobase biosynthetic process"/>
    <property type="evidence" value="ECO:0007669"/>
    <property type="project" value="InterPro"/>
</dbReference>
<dbReference type="GO" id="GO:0044205">
    <property type="term" value="P:'de novo' UMP biosynthetic process"/>
    <property type="evidence" value="ECO:0007669"/>
    <property type="project" value="UniProtKB-UniRule"/>
</dbReference>
<dbReference type="CDD" id="cd04738">
    <property type="entry name" value="DHOD_2_like"/>
    <property type="match status" value="1"/>
</dbReference>
<dbReference type="Gene3D" id="3.20.20.70">
    <property type="entry name" value="Aldolase class I"/>
    <property type="match status" value="1"/>
</dbReference>
<dbReference type="HAMAP" id="MF_00225">
    <property type="entry name" value="DHO_dh_type2"/>
    <property type="match status" value="1"/>
</dbReference>
<dbReference type="InterPro" id="IPR013785">
    <property type="entry name" value="Aldolase_TIM"/>
</dbReference>
<dbReference type="InterPro" id="IPR050074">
    <property type="entry name" value="DHO_dehydrogenase"/>
</dbReference>
<dbReference type="InterPro" id="IPR005719">
    <property type="entry name" value="Dihydroorotate_DH_2"/>
</dbReference>
<dbReference type="InterPro" id="IPR005720">
    <property type="entry name" value="Dihydroorotate_DH_cat"/>
</dbReference>
<dbReference type="InterPro" id="IPR001295">
    <property type="entry name" value="Dihydroorotate_DH_CS"/>
</dbReference>
<dbReference type="NCBIfam" id="NF003645">
    <property type="entry name" value="PRK05286.1-2"/>
    <property type="match status" value="1"/>
</dbReference>
<dbReference type="NCBIfam" id="NF003652">
    <property type="entry name" value="PRK05286.2-5"/>
    <property type="match status" value="1"/>
</dbReference>
<dbReference type="NCBIfam" id="TIGR01036">
    <property type="entry name" value="pyrD_sub2"/>
    <property type="match status" value="1"/>
</dbReference>
<dbReference type="PANTHER" id="PTHR48109:SF4">
    <property type="entry name" value="DIHYDROOROTATE DEHYDROGENASE (QUINONE), MITOCHONDRIAL"/>
    <property type="match status" value="1"/>
</dbReference>
<dbReference type="PANTHER" id="PTHR48109">
    <property type="entry name" value="DIHYDROOROTATE DEHYDROGENASE (QUINONE), MITOCHONDRIAL-RELATED"/>
    <property type="match status" value="1"/>
</dbReference>
<dbReference type="Pfam" id="PF01180">
    <property type="entry name" value="DHO_dh"/>
    <property type="match status" value="1"/>
</dbReference>
<dbReference type="SUPFAM" id="SSF51395">
    <property type="entry name" value="FMN-linked oxidoreductases"/>
    <property type="match status" value="1"/>
</dbReference>
<dbReference type="PROSITE" id="PS00911">
    <property type="entry name" value="DHODEHASE_1"/>
    <property type="match status" value="1"/>
</dbReference>
<dbReference type="PROSITE" id="PS00912">
    <property type="entry name" value="DHODEHASE_2"/>
    <property type="match status" value="1"/>
</dbReference>
<evidence type="ECO:0000255" key="1">
    <source>
        <dbReference type="HAMAP-Rule" id="MF_00225"/>
    </source>
</evidence>
<feature type="chain" id="PRO_0000336456" description="Dihydroorotate dehydrogenase (quinone)">
    <location>
        <begin position="1"/>
        <end position="360"/>
    </location>
</feature>
<feature type="active site" description="Nucleophile" evidence="1">
    <location>
        <position position="171"/>
    </location>
</feature>
<feature type="binding site" evidence="1">
    <location>
        <begin position="60"/>
        <end position="64"/>
    </location>
    <ligand>
        <name>FMN</name>
        <dbReference type="ChEBI" id="CHEBI:58210"/>
    </ligand>
</feature>
<feature type="binding site" evidence="1">
    <location>
        <position position="64"/>
    </location>
    <ligand>
        <name>substrate</name>
    </ligand>
</feature>
<feature type="binding site" evidence="1">
    <location>
        <position position="84"/>
    </location>
    <ligand>
        <name>FMN</name>
        <dbReference type="ChEBI" id="CHEBI:58210"/>
    </ligand>
</feature>
<feature type="binding site" evidence="1">
    <location>
        <begin position="109"/>
        <end position="113"/>
    </location>
    <ligand>
        <name>substrate</name>
    </ligand>
</feature>
<feature type="binding site" evidence="1">
    <location>
        <position position="137"/>
    </location>
    <ligand>
        <name>FMN</name>
        <dbReference type="ChEBI" id="CHEBI:58210"/>
    </ligand>
</feature>
<feature type="binding site" evidence="1">
    <location>
        <position position="168"/>
    </location>
    <ligand>
        <name>FMN</name>
        <dbReference type="ChEBI" id="CHEBI:58210"/>
    </ligand>
</feature>
<feature type="binding site" evidence="1">
    <location>
        <position position="168"/>
    </location>
    <ligand>
        <name>substrate</name>
    </ligand>
</feature>
<feature type="binding site" evidence="1">
    <location>
        <position position="173"/>
    </location>
    <ligand>
        <name>substrate</name>
    </ligand>
</feature>
<feature type="binding site" evidence="1">
    <location>
        <position position="213"/>
    </location>
    <ligand>
        <name>FMN</name>
        <dbReference type="ChEBI" id="CHEBI:58210"/>
    </ligand>
</feature>
<feature type="binding site" evidence="1">
    <location>
        <position position="241"/>
    </location>
    <ligand>
        <name>FMN</name>
        <dbReference type="ChEBI" id="CHEBI:58210"/>
    </ligand>
</feature>
<feature type="binding site" evidence="1">
    <location>
        <begin position="242"/>
        <end position="243"/>
    </location>
    <ligand>
        <name>substrate</name>
    </ligand>
</feature>
<feature type="binding site" evidence="1">
    <location>
        <position position="264"/>
    </location>
    <ligand>
        <name>FMN</name>
        <dbReference type="ChEBI" id="CHEBI:58210"/>
    </ligand>
</feature>
<feature type="binding site" evidence="1">
    <location>
        <position position="293"/>
    </location>
    <ligand>
        <name>FMN</name>
        <dbReference type="ChEBI" id="CHEBI:58210"/>
    </ligand>
</feature>
<feature type="binding site" evidence="1">
    <location>
        <begin position="314"/>
        <end position="315"/>
    </location>
    <ligand>
        <name>FMN</name>
        <dbReference type="ChEBI" id="CHEBI:58210"/>
    </ligand>
</feature>
<accession>A9IQ81</accession>